<sequence>MTSQGRGTRRGGARGNVRAFPENPADAAGLTPRQRKVLEVIRAEVERRGYPPSVREIGEAVGLTSTSSVAHQLKVLEEKGYLRRDPNRPRAMEVLSPDRPRRKADSGAAAVVSTFPGAAAAPAGVGGEGSAAYVPVLGRIAAGGPILAEQAIEDVFPLPKEIVGEGTLFLLRVVGESMINAAICDGDWVVVRQQPVADNGEIVAAMIDGEATVKRLRVRDGKIWLHPENPTFSDIPGEEATILGRIVAVLRRI</sequence>
<organism>
    <name type="scientific">Frankia alni (strain DSM 45986 / CECT 9034 / ACN14a)</name>
    <dbReference type="NCBI Taxonomy" id="326424"/>
    <lineage>
        <taxon>Bacteria</taxon>
        <taxon>Bacillati</taxon>
        <taxon>Actinomycetota</taxon>
        <taxon>Actinomycetes</taxon>
        <taxon>Frankiales</taxon>
        <taxon>Frankiaceae</taxon>
        <taxon>Frankia</taxon>
    </lineage>
</organism>
<gene>
    <name evidence="1" type="primary">lexA</name>
    <name type="ordered locus">FRAAL5703</name>
</gene>
<keyword id="KW-0068">Autocatalytic cleavage</keyword>
<keyword id="KW-0227">DNA damage</keyword>
<keyword id="KW-0234">DNA repair</keyword>
<keyword id="KW-0235">DNA replication</keyword>
<keyword id="KW-0238">DNA-binding</keyword>
<keyword id="KW-0378">Hydrolase</keyword>
<keyword id="KW-1185">Reference proteome</keyword>
<keyword id="KW-0678">Repressor</keyword>
<keyword id="KW-0742">SOS response</keyword>
<keyword id="KW-0804">Transcription</keyword>
<keyword id="KW-0805">Transcription regulation</keyword>
<reference key="1">
    <citation type="journal article" date="2007" name="Genome Res.">
        <title>Genome characteristics of facultatively symbiotic Frankia sp. strains reflect host range and host plant biogeography.</title>
        <authorList>
            <person name="Normand P."/>
            <person name="Lapierre P."/>
            <person name="Tisa L.S."/>
            <person name="Gogarten J.P."/>
            <person name="Alloisio N."/>
            <person name="Bagnarol E."/>
            <person name="Bassi C.A."/>
            <person name="Berry A.M."/>
            <person name="Bickhart D.M."/>
            <person name="Choisne N."/>
            <person name="Couloux A."/>
            <person name="Cournoyer B."/>
            <person name="Cruveiller S."/>
            <person name="Daubin V."/>
            <person name="Demange N."/>
            <person name="Francino M.P."/>
            <person name="Goltsman E."/>
            <person name="Huang Y."/>
            <person name="Kopp O.R."/>
            <person name="Labarre L."/>
            <person name="Lapidus A."/>
            <person name="Lavire C."/>
            <person name="Marechal J."/>
            <person name="Martinez M."/>
            <person name="Mastronunzio J.E."/>
            <person name="Mullin B.C."/>
            <person name="Niemann J."/>
            <person name="Pujic P."/>
            <person name="Rawnsley T."/>
            <person name="Rouy Z."/>
            <person name="Schenowitz C."/>
            <person name="Sellstedt A."/>
            <person name="Tavares F."/>
            <person name="Tomkins J.P."/>
            <person name="Vallenet D."/>
            <person name="Valverde C."/>
            <person name="Wall L.G."/>
            <person name="Wang Y."/>
            <person name="Medigue C."/>
            <person name="Benson D.R."/>
        </authorList>
    </citation>
    <scope>NUCLEOTIDE SEQUENCE [LARGE SCALE GENOMIC DNA]</scope>
    <source>
        <strain>DSM 45986 / CECT 9034 / ACN14a</strain>
    </source>
</reference>
<proteinExistence type="inferred from homology"/>
<name>LEXA_FRAAA</name>
<feature type="chain" id="PRO_0000322732" description="LexA repressor">
    <location>
        <begin position="1"/>
        <end position="253"/>
    </location>
</feature>
<feature type="DNA-binding region" description="H-T-H motif" evidence="1">
    <location>
        <begin position="54"/>
        <end position="74"/>
    </location>
</feature>
<feature type="region of interest" description="Disordered" evidence="2">
    <location>
        <begin position="1"/>
        <end position="33"/>
    </location>
</feature>
<feature type="active site" description="For autocatalytic cleavage activity" evidence="1">
    <location>
        <position position="177"/>
    </location>
</feature>
<feature type="active site" description="For autocatalytic cleavage activity" evidence="1">
    <location>
        <position position="214"/>
    </location>
</feature>
<feature type="site" description="Cleavage; by autolysis" evidence="1">
    <location>
        <begin position="142"/>
        <end position="143"/>
    </location>
</feature>
<protein>
    <recommendedName>
        <fullName evidence="1">LexA repressor</fullName>
        <ecNumber evidence="1">3.4.21.88</ecNumber>
    </recommendedName>
</protein>
<evidence type="ECO:0000255" key="1">
    <source>
        <dbReference type="HAMAP-Rule" id="MF_00015"/>
    </source>
</evidence>
<evidence type="ECO:0000256" key="2">
    <source>
        <dbReference type="SAM" id="MobiDB-lite"/>
    </source>
</evidence>
<accession>Q0RDY1</accession>
<comment type="function">
    <text evidence="1">Represses a number of genes involved in the response to DNA damage (SOS response), including recA and lexA. In the presence of single-stranded DNA, RecA interacts with LexA causing an autocatalytic cleavage which disrupts the DNA-binding part of LexA, leading to derepression of the SOS regulon and eventually DNA repair.</text>
</comment>
<comment type="catalytic activity">
    <reaction evidence="1">
        <text>Hydrolysis of Ala-|-Gly bond in repressor LexA.</text>
        <dbReference type="EC" id="3.4.21.88"/>
    </reaction>
</comment>
<comment type="subunit">
    <text evidence="1">Homodimer.</text>
</comment>
<comment type="similarity">
    <text evidence="1">Belongs to the peptidase S24 family.</text>
</comment>
<dbReference type="EC" id="3.4.21.88" evidence="1"/>
<dbReference type="EMBL" id="CT573213">
    <property type="protein sequence ID" value="CAJ64335.1"/>
    <property type="molecule type" value="Genomic_DNA"/>
</dbReference>
<dbReference type="RefSeq" id="WP_011606777.1">
    <property type="nucleotide sequence ID" value="NC_008278.1"/>
</dbReference>
<dbReference type="SMR" id="Q0RDY1"/>
<dbReference type="STRING" id="326424.FRAAL5703"/>
<dbReference type="MEROPS" id="S24.001"/>
<dbReference type="KEGG" id="fal:FRAAL5703"/>
<dbReference type="eggNOG" id="COG1974">
    <property type="taxonomic scope" value="Bacteria"/>
</dbReference>
<dbReference type="HOGENOM" id="CLU_066192_45_0_11"/>
<dbReference type="OrthoDB" id="9802364at2"/>
<dbReference type="Proteomes" id="UP000000657">
    <property type="component" value="Chromosome"/>
</dbReference>
<dbReference type="GO" id="GO:0003677">
    <property type="term" value="F:DNA binding"/>
    <property type="evidence" value="ECO:0007669"/>
    <property type="project" value="UniProtKB-UniRule"/>
</dbReference>
<dbReference type="GO" id="GO:0004252">
    <property type="term" value="F:serine-type endopeptidase activity"/>
    <property type="evidence" value="ECO:0007669"/>
    <property type="project" value="UniProtKB-UniRule"/>
</dbReference>
<dbReference type="GO" id="GO:0006281">
    <property type="term" value="P:DNA repair"/>
    <property type="evidence" value="ECO:0007669"/>
    <property type="project" value="UniProtKB-UniRule"/>
</dbReference>
<dbReference type="GO" id="GO:0006260">
    <property type="term" value="P:DNA replication"/>
    <property type="evidence" value="ECO:0007669"/>
    <property type="project" value="UniProtKB-UniRule"/>
</dbReference>
<dbReference type="GO" id="GO:0045892">
    <property type="term" value="P:negative regulation of DNA-templated transcription"/>
    <property type="evidence" value="ECO:0007669"/>
    <property type="project" value="UniProtKB-UniRule"/>
</dbReference>
<dbReference type="GO" id="GO:0006508">
    <property type="term" value="P:proteolysis"/>
    <property type="evidence" value="ECO:0007669"/>
    <property type="project" value="InterPro"/>
</dbReference>
<dbReference type="GO" id="GO:0009432">
    <property type="term" value="P:SOS response"/>
    <property type="evidence" value="ECO:0007669"/>
    <property type="project" value="UniProtKB-UniRule"/>
</dbReference>
<dbReference type="CDD" id="cd06529">
    <property type="entry name" value="S24_LexA-like"/>
    <property type="match status" value="1"/>
</dbReference>
<dbReference type="FunFam" id="1.10.10.10:FF:000009">
    <property type="entry name" value="LexA repressor"/>
    <property type="match status" value="1"/>
</dbReference>
<dbReference type="FunFam" id="2.10.109.10:FF:000001">
    <property type="entry name" value="LexA repressor"/>
    <property type="match status" value="1"/>
</dbReference>
<dbReference type="Gene3D" id="2.10.109.10">
    <property type="entry name" value="Umud Fragment, subunit A"/>
    <property type="match status" value="1"/>
</dbReference>
<dbReference type="Gene3D" id="1.10.10.10">
    <property type="entry name" value="Winged helix-like DNA-binding domain superfamily/Winged helix DNA-binding domain"/>
    <property type="match status" value="1"/>
</dbReference>
<dbReference type="HAMAP" id="MF_00015">
    <property type="entry name" value="LexA"/>
    <property type="match status" value="1"/>
</dbReference>
<dbReference type="InterPro" id="IPR006200">
    <property type="entry name" value="LexA"/>
</dbReference>
<dbReference type="InterPro" id="IPR039418">
    <property type="entry name" value="LexA-like"/>
</dbReference>
<dbReference type="InterPro" id="IPR036286">
    <property type="entry name" value="LexA/Signal_pep-like_sf"/>
</dbReference>
<dbReference type="InterPro" id="IPR006199">
    <property type="entry name" value="LexA_DNA-bd_dom"/>
</dbReference>
<dbReference type="InterPro" id="IPR050077">
    <property type="entry name" value="LexA_repressor"/>
</dbReference>
<dbReference type="InterPro" id="IPR006197">
    <property type="entry name" value="Peptidase_S24_LexA"/>
</dbReference>
<dbReference type="InterPro" id="IPR015927">
    <property type="entry name" value="Peptidase_S24_S26A/B/C"/>
</dbReference>
<dbReference type="InterPro" id="IPR036388">
    <property type="entry name" value="WH-like_DNA-bd_sf"/>
</dbReference>
<dbReference type="InterPro" id="IPR036390">
    <property type="entry name" value="WH_DNA-bd_sf"/>
</dbReference>
<dbReference type="NCBIfam" id="TIGR00498">
    <property type="entry name" value="lexA"/>
    <property type="match status" value="1"/>
</dbReference>
<dbReference type="PANTHER" id="PTHR33516">
    <property type="entry name" value="LEXA REPRESSOR"/>
    <property type="match status" value="1"/>
</dbReference>
<dbReference type="PANTHER" id="PTHR33516:SF2">
    <property type="entry name" value="LEXA REPRESSOR-RELATED"/>
    <property type="match status" value="1"/>
</dbReference>
<dbReference type="Pfam" id="PF01726">
    <property type="entry name" value="LexA_DNA_bind"/>
    <property type="match status" value="1"/>
</dbReference>
<dbReference type="Pfam" id="PF00717">
    <property type="entry name" value="Peptidase_S24"/>
    <property type="match status" value="1"/>
</dbReference>
<dbReference type="PRINTS" id="PR00726">
    <property type="entry name" value="LEXASERPTASE"/>
</dbReference>
<dbReference type="SUPFAM" id="SSF51306">
    <property type="entry name" value="LexA/Signal peptidase"/>
    <property type="match status" value="1"/>
</dbReference>
<dbReference type="SUPFAM" id="SSF46785">
    <property type="entry name" value="Winged helix' DNA-binding domain"/>
    <property type="match status" value="1"/>
</dbReference>